<sequence>MKDNERRILLGRIVGAFGVRGEIKLESWTEPRSAIFRYQPWILRSPNGQESTLEGARGRDSGKHLVARFPGIEDRDTVEAMHGTEVYVARSALPPPNADEYYWVDLEGLDVKTTEGVALGQVSHLFSTGANDVVVVRGDRERMIPFVLPEFVKSVDFEANLVVVDWDPEF</sequence>
<organism>
    <name type="scientific">Stenotrophomonas maltophilia (strain R551-3)</name>
    <dbReference type="NCBI Taxonomy" id="391008"/>
    <lineage>
        <taxon>Bacteria</taxon>
        <taxon>Pseudomonadati</taxon>
        <taxon>Pseudomonadota</taxon>
        <taxon>Gammaproteobacteria</taxon>
        <taxon>Lysobacterales</taxon>
        <taxon>Lysobacteraceae</taxon>
        <taxon>Stenotrophomonas</taxon>
        <taxon>Stenotrophomonas maltophilia group</taxon>
    </lineage>
</organism>
<reference key="1">
    <citation type="submission" date="2008-06" db="EMBL/GenBank/DDBJ databases">
        <title>Complete sequence of Stenotrophomonas maltophilia R551-3.</title>
        <authorList>
            <consortium name="US DOE Joint Genome Institute"/>
            <person name="Lucas S."/>
            <person name="Copeland A."/>
            <person name="Lapidus A."/>
            <person name="Glavina del Rio T."/>
            <person name="Dalin E."/>
            <person name="Tice H."/>
            <person name="Pitluck S."/>
            <person name="Chain P."/>
            <person name="Malfatti S."/>
            <person name="Shin M."/>
            <person name="Vergez L."/>
            <person name="Lang D."/>
            <person name="Schmutz J."/>
            <person name="Larimer F."/>
            <person name="Land M."/>
            <person name="Hauser L."/>
            <person name="Kyrpides N."/>
            <person name="Mikhailova N."/>
            <person name="Taghavi S."/>
            <person name="Monchy S."/>
            <person name="Newman L."/>
            <person name="Vangronsveld J."/>
            <person name="van der Lelie D."/>
            <person name="Richardson P."/>
        </authorList>
    </citation>
    <scope>NUCLEOTIDE SEQUENCE [LARGE SCALE GENOMIC DNA]</scope>
    <source>
        <strain>R551-3</strain>
    </source>
</reference>
<keyword id="KW-0143">Chaperone</keyword>
<keyword id="KW-0963">Cytoplasm</keyword>
<keyword id="KW-0690">Ribosome biogenesis</keyword>
<keyword id="KW-0698">rRNA processing</keyword>
<dbReference type="EMBL" id="CP001111">
    <property type="protein sequence ID" value="ACF50859.1"/>
    <property type="molecule type" value="Genomic_DNA"/>
</dbReference>
<dbReference type="RefSeq" id="WP_004149035.1">
    <property type="nucleotide sequence ID" value="NC_011071.1"/>
</dbReference>
<dbReference type="SMR" id="B4SPH2"/>
<dbReference type="STRING" id="391008.Smal_1154"/>
<dbReference type="KEGG" id="smt:Smal_1154"/>
<dbReference type="eggNOG" id="COG0806">
    <property type="taxonomic scope" value="Bacteria"/>
</dbReference>
<dbReference type="HOGENOM" id="CLU_077636_1_0_6"/>
<dbReference type="OrthoDB" id="9783509at2"/>
<dbReference type="Proteomes" id="UP000001867">
    <property type="component" value="Chromosome"/>
</dbReference>
<dbReference type="GO" id="GO:0005737">
    <property type="term" value="C:cytoplasm"/>
    <property type="evidence" value="ECO:0007669"/>
    <property type="project" value="UniProtKB-SubCell"/>
</dbReference>
<dbReference type="GO" id="GO:0005840">
    <property type="term" value="C:ribosome"/>
    <property type="evidence" value="ECO:0007669"/>
    <property type="project" value="InterPro"/>
</dbReference>
<dbReference type="GO" id="GO:0043022">
    <property type="term" value="F:ribosome binding"/>
    <property type="evidence" value="ECO:0007669"/>
    <property type="project" value="InterPro"/>
</dbReference>
<dbReference type="GO" id="GO:0042274">
    <property type="term" value="P:ribosomal small subunit biogenesis"/>
    <property type="evidence" value="ECO:0007669"/>
    <property type="project" value="UniProtKB-UniRule"/>
</dbReference>
<dbReference type="GO" id="GO:0006364">
    <property type="term" value="P:rRNA processing"/>
    <property type="evidence" value="ECO:0007669"/>
    <property type="project" value="UniProtKB-UniRule"/>
</dbReference>
<dbReference type="Gene3D" id="2.30.30.240">
    <property type="entry name" value="PRC-barrel domain"/>
    <property type="match status" value="1"/>
</dbReference>
<dbReference type="Gene3D" id="2.40.30.60">
    <property type="entry name" value="RimM"/>
    <property type="match status" value="1"/>
</dbReference>
<dbReference type="HAMAP" id="MF_00014">
    <property type="entry name" value="Ribosome_mat_RimM"/>
    <property type="match status" value="1"/>
</dbReference>
<dbReference type="InterPro" id="IPR011033">
    <property type="entry name" value="PRC_barrel-like_sf"/>
</dbReference>
<dbReference type="InterPro" id="IPR056792">
    <property type="entry name" value="PRC_RimM"/>
</dbReference>
<dbReference type="InterPro" id="IPR011961">
    <property type="entry name" value="RimM"/>
</dbReference>
<dbReference type="InterPro" id="IPR002676">
    <property type="entry name" value="RimM_N"/>
</dbReference>
<dbReference type="InterPro" id="IPR036976">
    <property type="entry name" value="RimM_N_sf"/>
</dbReference>
<dbReference type="InterPro" id="IPR009000">
    <property type="entry name" value="Transl_B-barrel_sf"/>
</dbReference>
<dbReference type="NCBIfam" id="TIGR02273">
    <property type="entry name" value="16S_RimM"/>
    <property type="match status" value="1"/>
</dbReference>
<dbReference type="PANTHER" id="PTHR33692">
    <property type="entry name" value="RIBOSOME MATURATION FACTOR RIMM"/>
    <property type="match status" value="1"/>
</dbReference>
<dbReference type="PANTHER" id="PTHR33692:SF1">
    <property type="entry name" value="RIBOSOME MATURATION FACTOR RIMM"/>
    <property type="match status" value="1"/>
</dbReference>
<dbReference type="Pfam" id="PF24986">
    <property type="entry name" value="PRC_RimM"/>
    <property type="match status" value="1"/>
</dbReference>
<dbReference type="Pfam" id="PF01782">
    <property type="entry name" value="RimM"/>
    <property type="match status" value="1"/>
</dbReference>
<dbReference type="SUPFAM" id="SSF50346">
    <property type="entry name" value="PRC-barrel domain"/>
    <property type="match status" value="1"/>
</dbReference>
<dbReference type="SUPFAM" id="SSF50447">
    <property type="entry name" value="Translation proteins"/>
    <property type="match status" value="1"/>
</dbReference>
<feature type="chain" id="PRO_1000089523" description="Ribosome maturation factor RimM">
    <location>
        <begin position="1"/>
        <end position="170"/>
    </location>
</feature>
<feature type="domain" description="PRC barrel" evidence="1">
    <location>
        <begin position="97"/>
        <end position="170"/>
    </location>
</feature>
<protein>
    <recommendedName>
        <fullName evidence="1">Ribosome maturation factor RimM</fullName>
    </recommendedName>
</protein>
<proteinExistence type="inferred from homology"/>
<evidence type="ECO:0000255" key="1">
    <source>
        <dbReference type="HAMAP-Rule" id="MF_00014"/>
    </source>
</evidence>
<gene>
    <name evidence="1" type="primary">rimM</name>
    <name type="ordered locus">Smal_1154</name>
</gene>
<name>RIMM_STRM5</name>
<comment type="function">
    <text evidence="1">An accessory protein needed during the final step in the assembly of 30S ribosomal subunit, possibly for assembly of the head region. Essential for efficient processing of 16S rRNA. May be needed both before and after RbfA during the maturation of 16S rRNA. It has affinity for free ribosomal 30S subunits but not for 70S ribosomes.</text>
</comment>
<comment type="subunit">
    <text evidence="1">Binds ribosomal protein uS19.</text>
</comment>
<comment type="subcellular location">
    <subcellularLocation>
        <location evidence="1">Cytoplasm</location>
    </subcellularLocation>
</comment>
<comment type="domain">
    <text evidence="1">The PRC barrel domain binds ribosomal protein uS19.</text>
</comment>
<comment type="similarity">
    <text evidence="1">Belongs to the RimM family.</text>
</comment>
<accession>B4SPH2</accession>